<name>EFPL_PSYIN</name>
<sequence length="190" mass="21089">MPKASDIKKNTAIEYNNNVYIIRDIERSVPQGRAGGSLYRMRMYDVVSGSKIDQTFKDNEMLPLADLVRRNVMFSYIDGEQYVFMDNEDYTPYNLDKDSIADEILLINEDTQGLQVVLVDGAPVALELPSSVELEIVETSPSIKGGSATARTKPAILSTGLTVQVPEHISTGDKIKVNTAEHKFMGRADK</sequence>
<organism>
    <name type="scientific">Psychromonas ingrahamii (strain DSM 17664 / CCUG 51855 / 37)</name>
    <dbReference type="NCBI Taxonomy" id="357804"/>
    <lineage>
        <taxon>Bacteria</taxon>
        <taxon>Pseudomonadati</taxon>
        <taxon>Pseudomonadota</taxon>
        <taxon>Gammaproteobacteria</taxon>
        <taxon>Alteromonadales</taxon>
        <taxon>Psychromonadaceae</taxon>
        <taxon>Psychromonas</taxon>
    </lineage>
</organism>
<dbReference type="EMBL" id="CP000510">
    <property type="protein sequence ID" value="ABM03287.1"/>
    <property type="molecule type" value="Genomic_DNA"/>
</dbReference>
<dbReference type="RefSeq" id="WP_011769847.1">
    <property type="nucleotide sequence ID" value="NC_008709.1"/>
</dbReference>
<dbReference type="SMR" id="A1SUX2"/>
<dbReference type="STRING" id="357804.Ping_1470"/>
<dbReference type="KEGG" id="pin:Ping_1470"/>
<dbReference type="eggNOG" id="COG0231">
    <property type="taxonomic scope" value="Bacteria"/>
</dbReference>
<dbReference type="HOGENOM" id="CLU_074944_2_0_6"/>
<dbReference type="OrthoDB" id="5599402at2"/>
<dbReference type="Proteomes" id="UP000000639">
    <property type="component" value="Chromosome"/>
</dbReference>
<dbReference type="GO" id="GO:0005737">
    <property type="term" value="C:cytoplasm"/>
    <property type="evidence" value="ECO:0007669"/>
    <property type="project" value="InterPro"/>
</dbReference>
<dbReference type="GO" id="GO:0003746">
    <property type="term" value="F:translation elongation factor activity"/>
    <property type="evidence" value="ECO:0007669"/>
    <property type="project" value="UniProtKB-UniRule"/>
</dbReference>
<dbReference type="GO" id="GO:0043043">
    <property type="term" value="P:peptide biosynthetic process"/>
    <property type="evidence" value="ECO:0007669"/>
    <property type="project" value="InterPro"/>
</dbReference>
<dbReference type="CDD" id="cd04470">
    <property type="entry name" value="S1_EF-P_repeat_1"/>
    <property type="match status" value="1"/>
</dbReference>
<dbReference type="CDD" id="cd05794">
    <property type="entry name" value="S1_EF-P_repeat_2"/>
    <property type="match status" value="1"/>
</dbReference>
<dbReference type="FunFam" id="2.40.50.140:FF:000004">
    <property type="entry name" value="Elongation factor P"/>
    <property type="match status" value="1"/>
</dbReference>
<dbReference type="Gene3D" id="2.30.30.30">
    <property type="match status" value="1"/>
</dbReference>
<dbReference type="Gene3D" id="2.40.50.140">
    <property type="entry name" value="Nucleic acid-binding proteins"/>
    <property type="match status" value="2"/>
</dbReference>
<dbReference type="HAMAP" id="MF_00646">
    <property type="entry name" value="EFP"/>
    <property type="match status" value="1"/>
</dbReference>
<dbReference type="InterPro" id="IPR015365">
    <property type="entry name" value="Elong-fact-P_C"/>
</dbReference>
<dbReference type="InterPro" id="IPR012340">
    <property type="entry name" value="NA-bd_OB-fold"/>
</dbReference>
<dbReference type="InterPro" id="IPR014722">
    <property type="entry name" value="Rib_uL2_dom2"/>
</dbReference>
<dbReference type="InterPro" id="IPR020599">
    <property type="entry name" value="Transl_elong_fac_P/YeiP"/>
</dbReference>
<dbReference type="InterPro" id="IPR013185">
    <property type="entry name" value="Transl_elong_KOW-like"/>
</dbReference>
<dbReference type="InterPro" id="IPR011897">
    <property type="entry name" value="Transl_elong_p-like_YeiP"/>
</dbReference>
<dbReference type="InterPro" id="IPR001059">
    <property type="entry name" value="Transl_elong_P/YeiP_cen"/>
</dbReference>
<dbReference type="InterPro" id="IPR013852">
    <property type="entry name" value="Transl_elong_P/YeiP_CS"/>
</dbReference>
<dbReference type="InterPro" id="IPR008991">
    <property type="entry name" value="Translation_prot_SH3-like_sf"/>
</dbReference>
<dbReference type="NCBIfam" id="NF001810">
    <property type="entry name" value="PRK00529.1"/>
    <property type="match status" value="1"/>
</dbReference>
<dbReference type="NCBIfam" id="NF003392">
    <property type="entry name" value="PRK04542.1"/>
    <property type="match status" value="1"/>
</dbReference>
<dbReference type="NCBIfam" id="TIGR02178">
    <property type="entry name" value="yeiP"/>
    <property type="match status" value="1"/>
</dbReference>
<dbReference type="PANTHER" id="PTHR30053">
    <property type="entry name" value="ELONGATION FACTOR P"/>
    <property type="match status" value="1"/>
</dbReference>
<dbReference type="PANTHER" id="PTHR30053:SF14">
    <property type="entry name" value="TRANSLATION ELONGATION FACTOR KOW-LIKE DOMAIN-CONTAINING PROTEIN"/>
    <property type="match status" value="1"/>
</dbReference>
<dbReference type="Pfam" id="PF01132">
    <property type="entry name" value="EFP"/>
    <property type="match status" value="1"/>
</dbReference>
<dbReference type="Pfam" id="PF08207">
    <property type="entry name" value="EFP_N"/>
    <property type="match status" value="1"/>
</dbReference>
<dbReference type="Pfam" id="PF09285">
    <property type="entry name" value="Elong-fact-P_C"/>
    <property type="match status" value="1"/>
</dbReference>
<dbReference type="PIRSF" id="PIRSF005901">
    <property type="entry name" value="EF-P"/>
    <property type="match status" value="1"/>
</dbReference>
<dbReference type="SMART" id="SM01185">
    <property type="entry name" value="EFP"/>
    <property type="match status" value="1"/>
</dbReference>
<dbReference type="SMART" id="SM00841">
    <property type="entry name" value="Elong-fact-P_C"/>
    <property type="match status" value="1"/>
</dbReference>
<dbReference type="SUPFAM" id="SSF50249">
    <property type="entry name" value="Nucleic acid-binding proteins"/>
    <property type="match status" value="2"/>
</dbReference>
<dbReference type="SUPFAM" id="SSF50104">
    <property type="entry name" value="Translation proteins SH3-like domain"/>
    <property type="match status" value="1"/>
</dbReference>
<dbReference type="PROSITE" id="PS01275">
    <property type="entry name" value="EFP"/>
    <property type="match status" value="1"/>
</dbReference>
<protein>
    <recommendedName>
        <fullName evidence="1">Elongation factor P-like protein</fullName>
    </recommendedName>
</protein>
<accession>A1SUX2</accession>
<comment type="similarity">
    <text evidence="1">Belongs to the elongation factor P family.</text>
</comment>
<keyword id="KW-1185">Reference proteome</keyword>
<proteinExistence type="inferred from homology"/>
<feature type="chain" id="PRO_0000384919" description="Elongation factor P-like protein">
    <location>
        <begin position="1"/>
        <end position="190"/>
    </location>
</feature>
<gene>
    <name type="ordered locus">Ping_1470</name>
</gene>
<evidence type="ECO:0000255" key="1">
    <source>
        <dbReference type="HAMAP-Rule" id="MF_00646"/>
    </source>
</evidence>
<reference key="1">
    <citation type="journal article" date="2008" name="BMC Genomics">
        <title>Genomics of an extreme psychrophile, Psychromonas ingrahamii.</title>
        <authorList>
            <person name="Riley M."/>
            <person name="Staley J.T."/>
            <person name="Danchin A."/>
            <person name="Wang T.Z."/>
            <person name="Brettin T.S."/>
            <person name="Hauser L.J."/>
            <person name="Land M.L."/>
            <person name="Thompson L.S."/>
        </authorList>
    </citation>
    <scope>NUCLEOTIDE SEQUENCE [LARGE SCALE GENOMIC DNA]</scope>
    <source>
        <strain>DSM 17664 / CCUG 51855 / 37</strain>
    </source>
</reference>